<comment type="function">
    <text evidence="1">Digests double-stranded RNA. Involved in the processing of primary rRNA transcript to yield the immediate precursors to the large and small rRNAs (23S and 16S). Processes some mRNAs, and tRNAs when they are encoded in the rRNA operon. Processes pre-crRNA and tracrRNA of type II CRISPR loci if present in the organism.</text>
</comment>
<comment type="catalytic activity">
    <reaction evidence="1">
        <text>Endonucleolytic cleavage to 5'-phosphomonoester.</text>
        <dbReference type="EC" id="3.1.26.3"/>
    </reaction>
</comment>
<comment type="cofactor">
    <cofactor evidence="1">
        <name>Mg(2+)</name>
        <dbReference type="ChEBI" id="CHEBI:18420"/>
    </cofactor>
</comment>
<comment type="subunit">
    <text evidence="1">Homodimer.</text>
</comment>
<comment type="subcellular location">
    <subcellularLocation>
        <location evidence="1">Cytoplasm</location>
    </subcellularLocation>
</comment>
<comment type="similarity">
    <text evidence="1">Belongs to the ribonuclease III family.</text>
</comment>
<name>RNC_LEPIN</name>
<organism>
    <name type="scientific">Leptospira interrogans serogroup Icterohaemorrhagiae serovar Lai (strain 56601)</name>
    <dbReference type="NCBI Taxonomy" id="189518"/>
    <lineage>
        <taxon>Bacteria</taxon>
        <taxon>Pseudomonadati</taxon>
        <taxon>Spirochaetota</taxon>
        <taxon>Spirochaetia</taxon>
        <taxon>Leptospirales</taxon>
        <taxon>Leptospiraceae</taxon>
        <taxon>Leptospira</taxon>
    </lineage>
</organism>
<gene>
    <name evidence="1" type="primary">rnc</name>
    <name type="ordered locus">LB_084</name>
</gene>
<proteinExistence type="inferred from homology"/>
<reference key="1">
    <citation type="journal article" date="2003" name="Nature">
        <title>Unique physiological and pathogenic features of Leptospira interrogans revealed by whole-genome sequencing.</title>
        <authorList>
            <person name="Ren S.-X."/>
            <person name="Fu G."/>
            <person name="Jiang X.-G."/>
            <person name="Zeng R."/>
            <person name="Miao Y.-G."/>
            <person name="Xu H."/>
            <person name="Zhang Y.-X."/>
            <person name="Xiong H."/>
            <person name="Lu G."/>
            <person name="Lu L.-F."/>
            <person name="Jiang H.-Q."/>
            <person name="Jia J."/>
            <person name="Tu Y.-F."/>
            <person name="Jiang J.-X."/>
            <person name="Gu W.-Y."/>
            <person name="Zhang Y.-Q."/>
            <person name="Cai Z."/>
            <person name="Sheng H.-H."/>
            <person name="Yin H.-F."/>
            <person name="Zhang Y."/>
            <person name="Zhu G.-F."/>
            <person name="Wan M."/>
            <person name="Huang H.-L."/>
            <person name="Qian Z."/>
            <person name="Wang S.-Y."/>
            <person name="Ma W."/>
            <person name="Yao Z.-J."/>
            <person name="Shen Y."/>
            <person name="Qiang B.-Q."/>
            <person name="Xia Q.-C."/>
            <person name="Guo X.-K."/>
            <person name="Danchin A."/>
            <person name="Saint Girons I."/>
            <person name="Somerville R.L."/>
            <person name="Wen Y.-M."/>
            <person name="Shi M.-H."/>
            <person name="Chen Z."/>
            <person name="Xu J.-G."/>
            <person name="Zhao G.-P."/>
        </authorList>
    </citation>
    <scope>NUCLEOTIDE SEQUENCE [LARGE SCALE GENOMIC DNA]</scope>
    <source>
        <strain>56601</strain>
    </source>
</reference>
<protein>
    <recommendedName>
        <fullName evidence="1">Ribonuclease 3</fullName>
        <ecNumber evidence="1">3.1.26.3</ecNumber>
    </recommendedName>
    <alternativeName>
        <fullName evidence="1">Ribonuclease III</fullName>
        <shortName evidence="1">RNase III</shortName>
    </alternativeName>
</protein>
<accession>Q8EXX3</accession>
<dbReference type="EC" id="3.1.26.3" evidence="1"/>
<dbReference type="EMBL" id="AE010301">
    <property type="protein sequence ID" value="AAN51643.1"/>
    <property type="molecule type" value="Genomic_DNA"/>
</dbReference>
<dbReference type="RefSeq" id="NP_714628.1">
    <property type="nucleotide sequence ID" value="NC_004343.2"/>
</dbReference>
<dbReference type="RefSeq" id="WP_000008630.1">
    <property type="nucleotide sequence ID" value="NC_004343.2"/>
</dbReference>
<dbReference type="SMR" id="Q8EXX3"/>
<dbReference type="FunCoup" id="Q8EXX3">
    <property type="interactions" value="411"/>
</dbReference>
<dbReference type="STRING" id="189518.LB_084"/>
<dbReference type="PaxDb" id="189518-LB_084"/>
<dbReference type="EnsemblBacteria" id="AAN51643">
    <property type="protein sequence ID" value="AAN51643"/>
    <property type="gene ID" value="LB_084"/>
</dbReference>
<dbReference type="GeneID" id="61141261"/>
<dbReference type="KEGG" id="lil:LB_084"/>
<dbReference type="PATRIC" id="fig|189518.3.peg.4412"/>
<dbReference type="HOGENOM" id="CLU_000907_1_3_12"/>
<dbReference type="InParanoid" id="Q8EXX3"/>
<dbReference type="OrthoDB" id="9805026at2"/>
<dbReference type="Proteomes" id="UP000001408">
    <property type="component" value="Chromosome II"/>
</dbReference>
<dbReference type="GO" id="GO:0005829">
    <property type="term" value="C:cytosol"/>
    <property type="evidence" value="ECO:0000318"/>
    <property type="project" value="GO_Central"/>
</dbReference>
<dbReference type="GO" id="GO:0003725">
    <property type="term" value="F:double-stranded RNA binding"/>
    <property type="evidence" value="ECO:0000318"/>
    <property type="project" value="GO_Central"/>
</dbReference>
<dbReference type="GO" id="GO:0046872">
    <property type="term" value="F:metal ion binding"/>
    <property type="evidence" value="ECO:0007669"/>
    <property type="project" value="UniProtKB-KW"/>
</dbReference>
<dbReference type="GO" id="GO:0004525">
    <property type="term" value="F:ribonuclease III activity"/>
    <property type="evidence" value="ECO:0000318"/>
    <property type="project" value="GO_Central"/>
</dbReference>
<dbReference type="GO" id="GO:0019843">
    <property type="term" value="F:rRNA binding"/>
    <property type="evidence" value="ECO:0007669"/>
    <property type="project" value="UniProtKB-KW"/>
</dbReference>
<dbReference type="GO" id="GO:0006397">
    <property type="term" value="P:mRNA processing"/>
    <property type="evidence" value="ECO:0007669"/>
    <property type="project" value="UniProtKB-UniRule"/>
</dbReference>
<dbReference type="GO" id="GO:0010468">
    <property type="term" value="P:regulation of gene expression"/>
    <property type="evidence" value="ECO:0000318"/>
    <property type="project" value="GO_Central"/>
</dbReference>
<dbReference type="GO" id="GO:0006396">
    <property type="term" value="P:RNA processing"/>
    <property type="evidence" value="ECO:0000318"/>
    <property type="project" value="GO_Central"/>
</dbReference>
<dbReference type="GO" id="GO:0006364">
    <property type="term" value="P:rRNA processing"/>
    <property type="evidence" value="ECO:0007669"/>
    <property type="project" value="UniProtKB-UniRule"/>
</dbReference>
<dbReference type="GO" id="GO:0008033">
    <property type="term" value="P:tRNA processing"/>
    <property type="evidence" value="ECO:0007669"/>
    <property type="project" value="UniProtKB-KW"/>
</dbReference>
<dbReference type="CDD" id="cd10845">
    <property type="entry name" value="DSRM_RNAse_III_family"/>
    <property type="match status" value="1"/>
</dbReference>
<dbReference type="CDD" id="cd00593">
    <property type="entry name" value="RIBOc"/>
    <property type="match status" value="1"/>
</dbReference>
<dbReference type="FunFam" id="1.10.1520.10:FF:000001">
    <property type="entry name" value="Ribonuclease 3"/>
    <property type="match status" value="1"/>
</dbReference>
<dbReference type="FunFam" id="3.30.160.20:FF:000003">
    <property type="entry name" value="Ribonuclease 3"/>
    <property type="match status" value="1"/>
</dbReference>
<dbReference type="Gene3D" id="3.30.160.20">
    <property type="match status" value="1"/>
</dbReference>
<dbReference type="Gene3D" id="1.10.1520.10">
    <property type="entry name" value="Ribonuclease III domain"/>
    <property type="match status" value="1"/>
</dbReference>
<dbReference type="HAMAP" id="MF_00104">
    <property type="entry name" value="RNase_III"/>
    <property type="match status" value="1"/>
</dbReference>
<dbReference type="InterPro" id="IPR014720">
    <property type="entry name" value="dsRBD_dom"/>
</dbReference>
<dbReference type="InterPro" id="IPR011907">
    <property type="entry name" value="RNase_III"/>
</dbReference>
<dbReference type="InterPro" id="IPR000999">
    <property type="entry name" value="RNase_III_dom"/>
</dbReference>
<dbReference type="InterPro" id="IPR036389">
    <property type="entry name" value="RNase_III_sf"/>
</dbReference>
<dbReference type="NCBIfam" id="TIGR02191">
    <property type="entry name" value="RNaseIII"/>
    <property type="match status" value="1"/>
</dbReference>
<dbReference type="PANTHER" id="PTHR11207:SF0">
    <property type="entry name" value="RIBONUCLEASE 3"/>
    <property type="match status" value="1"/>
</dbReference>
<dbReference type="PANTHER" id="PTHR11207">
    <property type="entry name" value="RIBONUCLEASE III"/>
    <property type="match status" value="1"/>
</dbReference>
<dbReference type="Pfam" id="PF00035">
    <property type="entry name" value="dsrm"/>
    <property type="match status" value="1"/>
</dbReference>
<dbReference type="Pfam" id="PF14622">
    <property type="entry name" value="Ribonucleas_3_3"/>
    <property type="match status" value="1"/>
</dbReference>
<dbReference type="SMART" id="SM00358">
    <property type="entry name" value="DSRM"/>
    <property type="match status" value="1"/>
</dbReference>
<dbReference type="SMART" id="SM00535">
    <property type="entry name" value="RIBOc"/>
    <property type="match status" value="1"/>
</dbReference>
<dbReference type="SUPFAM" id="SSF54768">
    <property type="entry name" value="dsRNA-binding domain-like"/>
    <property type="match status" value="1"/>
</dbReference>
<dbReference type="SUPFAM" id="SSF69065">
    <property type="entry name" value="RNase III domain-like"/>
    <property type="match status" value="1"/>
</dbReference>
<dbReference type="PROSITE" id="PS50137">
    <property type="entry name" value="DS_RBD"/>
    <property type="match status" value="1"/>
</dbReference>
<dbReference type="PROSITE" id="PS00517">
    <property type="entry name" value="RNASE_3_1"/>
    <property type="match status" value="1"/>
</dbReference>
<dbReference type="PROSITE" id="PS50142">
    <property type="entry name" value="RNASE_3_2"/>
    <property type="match status" value="1"/>
</dbReference>
<sequence>MSFKKAQSHFFLKNPERVRSLQKLSKKIGIKFSKVEYYNTAFIHSSYKNENQEILEDNERLEFLGDSVLGLVAARSLFRKYPKANEGELSRIKSRIVSTPILNSISEKLELSEYLLLGKGEKNSLGKGRRKLSANLFESLVGAIYLDQGFEIAEKFILRHLSEFVENPEKEESVRDYKTQLQEYSQKHFKILPIYRTKSESGPDHAKTFQVVVRIRDQWEASGSGVSKKSAEQNAAKELYNRIRKKT</sequence>
<keyword id="KW-0963">Cytoplasm</keyword>
<keyword id="KW-0255">Endonuclease</keyword>
<keyword id="KW-0378">Hydrolase</keyword>
<keyword id="KW-0460">Magnesium</keyword>
<keyword id="KW-0479">Metal-binding</keyword>
<keyword id="KW-0507">mRNA processing</keyword>
<keyword id="KW-0540">Nuclease</keyword>
<keyword id="KW-1185">Reference proteome</keyword>
<keyword id="KW-0694">RNA-binding</keyword>
<keyword id="KW-0698">rRNA processing</keyword>
<keyword id="KW-0699">rRNA-binding</keyword>
<keyword id="KW-0819">tRNA processing</keyword>
<feature type="chain" id="PRO_0000180406" description="Ribonuclease 3">
    <location>
        <begin position="1"/>
        <end position="247"/>
    </location>
</feature>
<feature type="domain" description="RNase III" evidence="1">
    <location>
        <begin position="21"/>
        <end position="149"/>
    </location>
</feature>
<feature type="domain" description="DRBM" evidence="1">
    <location>
        <begin position="176"/>
        <end position="245"/>
    </location>
</feature>
<feature type="active site" evidence="1">
    <location>
        <position position="66"/>
    </location>
</feature>
<feature type="active site" evidence="1">
    <location>
        <position position="138"/>
    </location>
</feature>
<feature type="binding site" evidence="1">
    <location>
        <position position="62"/>
    </location>
    <ligand>
        <name>Mg(2+)</name>
        <dbReference type="ChEBI" id="CHEBI:18420"/>
    </ligand>
</feature>
<feature type="binding site" evidence="1">
    <location>
        <position position="135"/>
    </location>
    <ligand>
        <name>Mg(2+)</name>
        <dbReference type="ChEBI" id="CHEBI:18420"/>
    </ligand>
</feature>
<feature type="binding site" evidence="1">
    <location>
        <position position="138"/>
    </location>
    <ligand>
        <name>Mg(2+)</name>
        <dbReference type="ChEBI" id="CHEBI:18420"/>
    </ligand>
</feature>
<evidence type="ECO:0000255" key="1">
    <source>
        <dbReference type="HAMAP-Rule" id="MF_00104"/>
    </source>
</evidence>